<organism>
    <name type="scientific">Bombyx mori</name>
    <name type="common">Silk moth</name>
    <dbReference type="NCBI Taxonomy" id="7091"/>
    <lineage>
        <taxon>Eukaryota</taxon>
        <taxon>Metazoa</taxon>
        <taxon>Ecdysozoa</taxon>
        <taxon>Arthropoda</taxon>
        <taxon>Hexapoda</taxon>
        <taxon>Insecta</taxon>
        <taxon>Pterygota</taxon>
        <taxon>Neoptera</taxon>
        <taxon>Endopterygota</taxon>
        <taxon>Lepidoptera</taxon>
        <taxon>Glossata</taxon>
        <taxon>Ditrysia</taxon>
        <taxon>Bombycoidea</taxon>
        <taxon>Bombycidae</taxon>
        <taxon>Bombycinae</taxon>
        <taxon>Bombyx</taxon>
    </lineage>
</organism>
<feature type="signal peptide" evidence="2">
    <location>
        <begin position="1"/>
        <end position="16"/>
    </location>
</feature>
<feature type="propeptide" id="PRO_0000004980" evidence="2">
    <location>
        <begin position="17"/>
        <end position="120"/>
    </location>
</feature>
<feature type="peptide" id="PRO_0000004981" description="Lebocin-4">
    <location>
        <begin position="121"/>
        <end position="152"/>
    </location>
</feature>
<feature type="propeptide" id="PRO_0000004982" evidence="2">
    <location>
        <begin position="153"/>
        <end position="179"/>
    </location>
</feature>
<feature type="glycosylation site" description="O-linked (GalNAc...) threonine" evidence="1">
    <location>
        <position position="135"/>
    </location>
</feature>
<evidence type="ECO:0000250" key="1"/>
<evidence type="ECO:0000255" key="2"/>
<evidence type="ECO:0000305" key="3"/>
<keyword id="KW-0044">Antibiotic</keyword>
<keyword id="KW-0929">Antimicrobial</keyword>
<keyword id="KW-0325">Glycoprotein</keyword>
<keyword id="KW-0391">Immunity</keyword>
<keyword id="KW-0399">Innate immunity</keyword>
<keyword id="KW-1185">Reference proteome</keyword>
<keyword id="KW-0964">Secreted</keyword>
<keyword id="KW-0732">Signal</keyword>
<proteinExistence type="evidence at transcript level"/>
<name>LEB4_BOMMO</name>
<accession>O15946</accession>
<protein>
    <recommendedName>
        <fullName>Lebocin-4</fullName>
        <shortName>Leb 4</shortName>
    </recommendedName>
</protein>
<gene>
    <name type="primary">LEB4</name>
</gene>
<sequence length="179" mass="21064">MYKFLVFSSVLVLFFAQASCQRFIQPTYRPPPTRRPIIRTARQAGQEPLWLYQGDNIPRAPSTADHPILPSKIDDVKLDPNRRYVRSVTNPENNEASIESSHHTVDIGLDRPIESHRNTRDLRFWNPREKLPLPTLPPFNPKPIYIDMGNRYRRHASDDQEELRHHNEHFLIPRDILQD</sequence>
<comment type="function">
    <text>Antibacterial peptide.</text>
</comment>
<comment type="subcellular location">
    <subcellularLocation>
        <location>Secreted</location>
    </subcellularLocation>
</comment>
<comment type="tissue specificity">
    <text>Hemolymph. Produced in fat body.</text>
</comment>
<comment type="induction">
    <text>By bacterial infection.</text>
</comment>
<comment type="PTM">
    <text>O-glycosylation is important for the antibacterial activity of lebocin.</text>
</comment>
<comment type="similarity">
    <text evidence="3">Belongs to the lebocin family.</text>
</comment>
<dbReference type="EMBL" id="AB003036">
    <property type="protein sequence ID" value="BAA22884.1"/>
    <property type="molecule type" value="Genomic_DNA"/>
</dbReference>
<dbReference type="PIR" id="JC5666">
    <property type="entry name" value="JC5666"/>
</dbReference>
<dbReference type="RefSeq" id="NP_001119731.1">
    <property type="nucleotide sequence ID" value="NM_001126259.1"/>
</dbReference>
<dbReference type="STRING" id="7091.O15946"/>
<dbReference type="GlyCosmos" id="O15946">
    <property type="glycosylation" value="1 site, No reported glycans"/>
</dbReference>
<dbReference type="HOGENOM" id="CLU_128921_0_0_1"/>
<dbReference type="InParanoid" id="O15946"/>
<dbReference type="Proteomes" id="UP000005204">
    <property type="component" value="Unassembled WGS sequence"/>
</dbReference>
<dbReference type="GO" id="GO:0005576">
    <property type="term" value="C:extracellular region"/>
    <property type="evidence" value="ECO:0007669"/>
    <property type="project" value="UniProtKB-SubCell"/>
</dbReference>
<dbReference type="GO" id="GO:0042742">
    <property type="term" value="P:defense response to bacterium"/>
    <property type="evidence" value="ECO:0007669"/>
    <property type="project" value="UniProtKB-KW"/>
</dbReference>
<dbReference type="GO" id="GO:0045087">
    <property type="term" value="P:innate immune response"/>
    <property type="evidence" value="ECO:0007669"/>
    <property type="project" value="UniProtKB-KW"/>
</dbReference>
<reference key="1">
    <citation type="journal article" date="1997" name="Biochem. Biophys. Res. Commun.">
        <title>A novel member of lebocin gene family from the silkworm, Bombyx mori.</title>
        <authorList>
            <person name="Furukawa S."/>
            <person name="Taniai K."/>
            <person name="Ishibashi J."/>
            <person name="Hara S."/>
            <person name="Shono T."/>
            <person name="Yamakawa M."/>
        </authorList>
    </citation>
    <scope>NUCLEOTIDE SEQUENCE [GENOMIC DNA]</scope>
    <source>
        <strain>Tokai X Asahi</strain>
    </source>
</reference>